<comment type="function">
    <text evidence="1">RNA chaperone with significant RNA binding, RNA strand exchange and RNA duplexing activities. May regulate ProP activity through an RNA-based, post-transcriptional mechanism.</text>
</comment>
<comment type="subcellular location">
    <subcellularLocation>
        <location evidence="1">Cytoplasm</location>
    </subcellularLocation>
</comment>
<comment type="similarity">
    <text evidence="1">Belongs to the ProQ family.</text>
</comment>
<organism>
    <name type="scientific">Photorhabdus laumondii subsp. laumondii (strain DSM 15139 / CIP 105565 / TT01)</name>
    <name type="common">Photorhabdus luminescens subsp. laumondii</name>
    <dbReference type="NCBI Taxonomy" id="243265"/>
    <lineage>
        <taxon>Bacteria</taxon>
        <taxon>Pseudomonadati</taxon>
        <taxon>Pseudomonadota</taxon>
        <taxon>Gammaproteobacteria</taxon>
        <taxon>Enterobacterales</taxon>
        <taxon>Morganellaceae</taxon>
        <taxon>Photorhabdus</taxon>
    </lineage>
</organism>
<accession>Q7N3N2</accession>
<gene>
    <name evidence="1" type="primary">proQ</name>
    <name type="ordered locus">plu2683</name>
</gene>
<feature type="chain" id="PRO_0000214620" description="RNA chaperone ProQ">
    <location>
        <begin position="1"/>
        <end position="239"/>
    </location>
</feature>
<feature type="region of interest" description="Disordered" evidence="2">
    <location>
        <begin position="107"/>
        <end position="177"/>
    </location>
</feature>
<feature type="compositionally biased region" description="Basic and acidic residues" evidence="2">
    <location>
        <begin position="115"/>
        <end position="137"/>
    </location>
</feature>
<keyword id="KW-0143">Chaperone</keyword>
<keyword id="KW-0963">Cytoplasm</keyword>
<keyword id="KW-1185">Reference proteome</keyword>
<keyword id="KW-0694">RNA-binding</keyword>
<protein>
    <recommendedName>
        <fullName evidence="1">RNA chaperone ProQ</fullName>
    </recommendedName>
</protein>
<dbReference type="EMBL" id="BX571868">
    <property type="protein sequence ID" value="CAE15057.1"/>
    <property type="molecule type" value="Genomic_DNA"/>
</dbReference>
<dbReference type="RefSeq" id="WP_011146905.1">
    <property type="nucleotide sequence ID" value="NC_005126.1"/>
</dbReference>
<dbReference type="SMR" id="Q7N3N2"/>
<dbReference type="STRING" id="243265.plu2683"/>
<dbReference type="GeneID" id="48848946"/>
<dbReference type="KEGG" id="plu:plu2683"/>
<dbReference type="eggNOG" id="COG3109">
    <property type="taxonomic scope" value="Bacteria"/>
</dbReference>
<dbReference type="HOGENOM" id="CLU_113254_0_0_6"/>
<dbReference type="OrthoDB" id="8421419at2"/>
<dbReference type="Proteomes" id="UP000002514">
    <property type="component" value="Chromosome"/>
</dbReference>
<dbReference type="GO" id="GO:0005829">
    <property type="term" value="C:cytosol"/>
    <property type="evidence" value="ECO:0007669"/>
    <property type="project" value="TreeGrafter"/>
</dbReference>
<dbReference type="GO" id="GO:0033592">
    <property type="term" value="F:RNA strand annealing activity"/>
    <property type="evidence" value="ECO:0007669"/>
    <property type="project" value="UniProtKB-UniRule"/>
</dbReference>
<dbReference type="GO" id="GO:0034057">
    <property type="term" value="F:RNA strand-exchange activity"/>
    <property type="evidence" value="ECO:0007669"/>
    <property type="project" value="UniProtKB-UniRule"/>
</dbReference>
<dbReference type="GO" id="GO:0010608">
    <property type="term" value="P:post-transcriptional regulation of gene expression"/>
    <property type="evidence" value="ECO:0007669"/>
    <property type="project" value="InterPro"/>
</dbReference>
<dbReference type="FunFam" id="1.10.1710.10:FF:000001">
    <property type="entry name" value="RNA chaperone ProQ"/>
    <property type="match status" value="1"/>
</dbReference>
<dbReference type="Gene3D" id="1.10.1710.10">
    <property type="entry name" value="ProQ/FinO domain"/>
    <property type="match status" value="1"/>
</dbReference>
<dbReference type="HAMAP" id="MF_00749">
    <property type="entry name" value="ProQ"/>
    <property type="match status" value="1"/>
</dbReference>
<dbReference type="InterPro" id="IPR023529">
    <property type="entry name" value="ProQ"/>
</dbReference>
<dbReference type="InterPro" id="IPR016103">
    <property type="entry name" value="ProQ/FinO"/>
</dbReference>
<dbReference type="InterPro" id="IPR036442">
    <property type="entry name" value="ProQ/FinO_sf"/>
</dbReference>
<dbReference type="InterPro" id="IPR035236">
    <property type="entry name" value="ProQ_C"/>
</dbReference>
<dbReference type="NCBIfam" id="NF003434">
    <property type="entry name" value="PRK04950.1"/>
    <property type="match status" value="1"/>
</dbReference>
<dbReference type="PANTHER" id="PTHR38106">
    <property type="entry name" value="RNA CHAPERONE PROQ"/>
    <property type="match status" value="1"/>
</dbReference>
<dbReference type="PANTHER" id="PTHR38106:SF1">
    <property type="entry name" value="RNA CHAPERONE PROQ"/>
    <property type="match status" value="1"/>
</dbReference>
<dbReference type="Pfam" id="PF04352">
    <property type="entry name" value="ProQ"/>
    <property type="match status" value="1"/>
</dbReference>
<dbReference type="Pfam" id="PF17516">
    <property type="entry name" value="ProQ_C"/>
    <property type="match status" value="1"/>
</dbReference>
<dbReference type="SMART" id="SM00945">
    <property type="entry name" value="ProQ"/>
    <property type="match status" value="1"/>
</dbReference>
<dbReference type="SUPFAM" id="SSF48657">
    <property type="entry name" value="FinO-like"/>
    <property type="match status" value="1"/>
</dbReference>
<reference key="1">
    <citation type="journal article" date="2003" name="Nat. Biotechnol.">
        <title>The genome sequence of the entomopathogenic bacterium Photorhabdus luminescens.</title>
        <authorList>
            <person name="Duchaud E."/>
            <person name="Rusniok C."/>
            <person name="Frangeul L."/>
            <person name="Buchrieser C."/>
            <person name="Givaudan A."/>
            <person name="Taourit S."/>
            <person name="Bocs S."/>
            <person name="Boursaux-Eude C."/>
            <person name="Chandler M."/>
            <person name="Charles J.-F."/>
            <person name="Dassa E."/>
            <person name="Derose R."/>
            <person name="Derzelle S."/>
            <person name="Freyssinet G."/>
            <person name="Gaudriault S."/>
            <person name="Medigue C."/>
            <person name="Lanois A."/>
            <person name="Powell K."/>
            <person name="Siguier P."/>
            <person name="Vincent R."/>
            <person name="Wingate V."/>
            <person name="Zouine M."/>
            <person name="Glaser P."/>
            <person name="Boemare N."/>
            <person name="Danchin A."/>
            <person name="Kunst F."/>
        </authorList>
    </citation>
    <scope>NUCLEOTIDE SEQUENCE [LARGE SCALE GENOMIC DNA]</scope>
    <source>
        <strain>DSM 15139 / CIP 105565 / TT01</strain>
    </source>
</reference>
<evidence type="ECO:0000255" key="1">
    <source>
        <dbReference type="HAMAP-Rule" id="MF_00749"/>
    </source>
</evidence>
<evidence type="ECO:0000256" key="2">
    <source>
        <dbReference type="SAM" id="MobiDB-lite"/>
    </source>
</evidence>
<name>PROQ_PHOLL</name>
<sequence length="239" mass="26740">MENQPKLNSSKEIIAFLAERFPLCFVAEGEARPLKIGIFQDIVERIQDEECLSKTQLRSALRLYTSSWRYLYGVKEGAQRVDLDGNSCGELEAEHIEHALQQLTEAKARVQAQRAEQRAKKREAENVAAGEKNERPTAKKPAPRRRANNTEGEKRQPPRPQKRPQQARKPVAKPVQAKPIQAAPIQIVDVSSLKIGQEIKVRVGKSSVDASVLEVAKDGVRVQLPSGLAMIVRAEHLQF</sequence>
<proteinExistence type="inferred from homology"/>